<comment type="function">
    <text evidence="1">Extracellular dipeptidyl-peptidase which removes N-terminal dipeptides sequentially from polypeptides having unsubstituted N-termini provided that the penultimate residue is proline. Contributes to pathogenicity (By similarity).</text>
</comment>
<comment type="catalytic activity">
    <reaction evidence="3">
        <text>Release of an N-terminal dipeptide, Xaa-Yaa-|-Zaa-, from a polypeptide, preferentially when Yaa is Pro, provided Zaa is neither Pro nor hydroxyproline.</text>
        <dbReference type="EC" id="3.4.14.5"/>
    </reaction>
</comment>
<comment type="subcellular location">
    <subcellularLocation>
        <location evidence="4">Secreted</location>
    </subcellularLocation>
</comment>
<comment type="similarity">
    <text evidence="5">Belongs to the peptidase S9B family.</text>
</comment>
<organism>
    <name type="scientific">Arthroderma benhamiae (strain ATCC MYA-4681 / CBS 112371)</name>
    <name type="common">Trichophyton mentagrophytes</name>
    <dbReference type="NCBI Taxonomy" id="663331"/>
    <lineage>
        <taxon>Eukaryota</taxon>
        <taxon>Fungi</taxon>
        <taxon>Dikarya</taxon>
        <taxon>Ascomycota</taxon>
        <taxon>Pezizomycotina</taxon>
        <taxon>Eurotiomycetes</taxon>
        <taxon>Eurotiomycetidae</taxon>
        <taxon>Onygenales</taxon>
        <taxon>Arthrodermataceae</taxon>
        <taxon>Trichophyton</taxon>
    </lineage>
</organism>
<feature type="signal peptide" evidence="2">
    <location>
        <begin position="1"/>
        <end position="18"/>
    </location>
</feature>
<feature type="chain" id="PRO_0000397808" description="Probable dipeptidyl peptidase 4">
    <location>
        <begin position="19"/>
        <end position="778"/>
    </location>
</feature>
<feature type="active site" description="Charge relay system" evidence="3">
    <location>
        <position position="616"/>
    </location>
</feature>
<feature type="active site" description="Charge relay system" evidence="3">
    <location>
        <position position="693"/>
    </location>
</feature>
<feature type="active site" description="Charge relay system" evidence="3">
    <location>
        <position position="728"/>
    </location>
</feature>
<feature type="glycosylation site" description="N-linked (GlcNAc...) asparagine" evidence="2">
    <location>
        <position position="84"/>
    </location>
</feature>
<feature type="glycosylation site" description="N-linked (GlcNAc...) asparagine" evidence="2">
    <location>
        <position position="114"/>
    </location>
</feature>
<feature type="glycosylation site" description="N-linked (GlcNAc...) asparagine" evidence="2">
    <location>
        <position position="222"/>
    </location>
</feature>
<protein>
    <recommendedName>
        <fullName>Probable dipeptidyl peptidase 4</fullName>
        <ecNumber>3.4.14.5</ecNumber>
    </recommendedName>
    <alternativeName>
        <fullName>Dipeptidyl peptidase IV</fullName>
        <shortName>DPP IV</shortName>
        <shortName>DppIV</shortName>
    </alternativeName>
</protein>
<name>DPP4_ARTBC</name>
<reference key="1">
    <citation type="journal article" date="2011" name="Genome Biol.">
        <title>Comparative and functional genomics provide insights into the pathogenicity of dermatophytic fungi.</title>
        <authorList>
            <person name="Burmester A."/>
            <person name="Shelest E."/>
            <person name="Gloeckner G."/>
            <person name="Heddergott C."/>
            <person name="Schindler S."/>
            <person name="Staib P."/>
            <person name="Heidel A."/>
            <person name="Felder M."/>
            <person name="Petzold A."/>
            <person name="Szafranski K."/>
            <person name="Feuermann M."/>
            <person name="Pedruzzi I."/>
            <person name="Priebe S."/>
            <person name="Groth M."/>
            <person name="Winkler R."/>
            <person name="Li W."/>
            <person name="Kniemeyer O."/>
            <person name="Schroeckh V."/>
            <person name="Hertweck C."/>
            <person name="Hube B."/>
            <person name="White T.C."/>
            <person name="Platzer M."/>
            <person name="Guthke R."/>
            <person name="Heitman J."/>
            <person name="Woestemeyer J."/>
            <person name="Zipfel P.F."/>
            <person name="Monod M."/>
            <person name="Brakhage A.A."/>
        </authorList>
    </citation>
    <scope>NUCLEOTIDE SEQUENCE [LARGE SCALE GENOMIC DNA]</scope>
    <scope>IDENTIFICATION BY MASS SPECTROMETRY</scope>
    <scope>SUBCELLULAR LOCATION</scope>
    <source>
        <strain>ATCC MYA-4681 / CBS 112371</strain>
    </source>
</reference>
<keyword id="KW-0031">Aminopeptidase</keyword>
<keyword id="KW-0325">Glycoprotein</keyword>
<keyword id="KW-0378">Hydrolase</keyword>
<keyword id="KW-0645">Protease</keyword>
<keyword id="KW-1185">Reference proteome</keyword>
<keyword id="KW-0964">Secreted</keyword>
<keyword id="KW-0720">Serine protease</keyword>
<keyword id="KW-0732">Signal</keyword>
<keyword id="KW-0843">Virulence</keyword>
<proteinExistence type="evidence at protein level"/>
<accession>D4APE2</accession>
<gene>
    <name type="primary">DPP4</name>
    <name type="ORF">ARB_06110</name>
</gene>
<sequence>MKTSQFLSLLLLAGIAQAIVPPREPRPPTGGGNKLLTYKECVPRATISPRSTSLAWINSDEDGQYISQSDDGALILQNIVTNTNKTLVAADKVPKGYYDYWFKPDLSAVLWATNYTKQYRHSYFANYFILDIEKGSLTPLSQDQAGDIQYAQWSPMDNSIAYVRGNDLYIWNNGKTKRITENGGPDIFNGVPDWVYEEEIFGDRFALWFSPDGEYLAYLRFNETGVPTYTIPYYKNKQKIAPAYPRELEIRYPKVSAKNPTVQFHLLNIASSQETTIPVTAFPENDLVIGEVAWLSSGHDSVAYRAFNRVQDREKIVSVKVESKESKVIRERDGTDGWIDNLLSMSYIGDVNGKEYYVDISDASGWAHIYLYPVDGGKEIALTTGEWEVVAILKVDTKKKLIYFTSTKYHSTTRHVYSVSYDTKVMTPLVNDKEAAYYTASFSAKGGYYILSYQGPNVPYQELYSTKDSKKPLKTITSNDALLEKLKEYKLPKVSFFEIKLPSGETLNVKQRLPPNFNPHKKYPVLFTPYGGPGAQEVSQAWNSLDFKSYITSDPELEYVTWTVDNRGTGYKGRKFRSAVAKRLGFLEPQDQVFAAKELLKNRWADKDHIGIWGWSYGGFLTAKTLETDSGVFTFGISTAPVSDFRLYDSMYTERYMKTVELNADGYSETAVHKVDGFKNLKGHYLIQHGTGDDNVHFQNAAVLSNTLMNGGVTADKLTTQWFTDSDHGIRYDMDSTYQYKQLAKMVYDQKQRKPERPPMHQWSKRVLAALFGERAEE</sequence>
<evidence type="ECO:0000250" key="1"/>
<evidence type="ECO:0000255" key="2"/>
<evidence type="ECO:0000255" key="3">
    <source>
        <dbReference type="PROSITE-ProRule" id="PRU10084"/>
    </source>
</evidence>
<evidence type="ECO:0000269" key="4">
    <source>
    </source>
</evidence>
<evidence type="ECO:0000305" key="5"/>
<dbReference type="EC" id="3.4.14.5"/>
<dbReference type="EMBL" id="ABSU01000004">
    <property type="protein sequence ID" value="EFE35153.1"/>
    <property type="molecule type" value="Genomic_DNA"/>
</dbReference>
<dbReference type="RefSeq" id="XP_003015798.1">
    <property type="nucleotide sequence ID" value="XM_003015752.1"/>
</dbReference>
<dbReference type="SMR" id="D4APE2"/>
<dbReference type="STRING" id="663331.D4APE2"/>
<dbReference type="ESTHER" id="artbc-dpp4">
    <property type="family name" value="DPP4N_Peptidase_S9"/>
</dbReference>
<dbReference type="GlyCosmos" id="D4APE2">
    <property type="glycosylation" value="3 sites, No reported glycans"/>
</dbReference>
<dbReference type="GeneID" id="9526080"/>
<dbReference type="KEGG" id="abe:ARB_06110"/>
<dbReference type="eggNOG" id="KOG2100">
    <property type="taxonomic scope" value="Eukaryota"/>
</dbReference>
<dbReference type="HOGENOM" id="CLU_006105_0_2_1"/>
<dbReference type="OMA" id="YTSTEHH"/>
<dbReference type="Proteomes" id="UP000008866">
    <property type="component" value="Unassembled WGS sequence"/>
</dbReference>
<dbReference type="GO" id="GO:0005576">
    <property type="term" value="C:extracellular region"/>
    <property type="evidence" value="ECO:0007669"/>
    <property type="project" value="UniProtKB-SubCell"/>
</dbReference>
<dbReference type="GO" id="GO:0005886">
    <property type="term" value="C:plasma membrane"/>
    <property type="evidence" value="ECO:0007669"/>
    <property type="project" value="TreeGrafter"/>
</dbReference>
<dbReference type="GO" id="GO:0004177">
    <property type="term" value="F:aminopeptidase activity"/>
    <property type="evidence" value="ECO:0007669"/>
    <property type="project" value="UniProtKB-KW"/>
</dbReference>
<dbReference type="GO" id="GO:0008239">
    <property type="term" value="F:dipeptidyl-peptidase activity"/>
    <property type="evidence" value="ECO:0007669"/>
    <property type="project" value="UniProtKB-EC"/>
</dbReference>
<dbReference type="GO" id="GO:0004252">
    <property type="term" value="F:serine-type endopeptidase activity"/>
    <property type="evidence" value="ECO:0007669"/>
    <property type="project" value="InterPro"/>
</dbReference>
<dbReference type="GO" id="GO:0006508">
    <property type="term" value="P:proteolysis"/>
    <property type="evidence" value="ECO:0007669"/>
    <property type="project" value="UniProtKB-KW"/>
</dbReference>
<dbReference type="FunFam" id="3.40.50.1820:FF:000003">
    <property type="entry name" value="Dipeptidyl peptidase 4"/>
    <property type="match status" value="1"/>
</dbReference>
<dbReference type="FunFam" id="2.140.10.30:FF:000003">
    <property type="entry name" value="Probable dipeptidyl peptidase 4"/>
    <property type="match status" value="1"/>
</dbReference>
<dbReference type="Gene3D" id="3.40.50.1820">
    <property type="entry name" value="alpha/beta hydrolase"/>
    <property type="match status" value="1"/>
</dbReference>
<dbReference type="Gene3D" id="2.140.10.30">
    <property type="entry name" value="Dipeptidylpeptidase IV, N-terminal domain"/>
    <property type="match status" value="1"/>
</dbReference>
<dbReference type="InterPro" id="IPR029058">
    <property type="entry name" value="AB_hydrolase_fold"/>
</dbReference>
<dbReference type="InterPro" id="IPR002471">
    <property type="entry name" value="Pept_S9_AS"/>
</dbReference>
<dbReference type="InterPro" id="IPR001375">
    <property type="entry name" value="Peptidase_S9_cat"/>
</dbReference>
<dbReference type="InterPro" id="IPR002469">
    <property type="entry name" value="Peptidase_S9B_N"/>
</dbReference>
<dbReference type="InterPro" id="IPR050278">
    <property type="entry name" value="Serine_Prot_S9B/DPPIV"/>
</dbReference>
<dbReference type="PANTHER" id="PTHR11731:SF162">
    <property type="entry name" value="DIPEPTIDYL PEPTIDASE 4-RELATED"/>
    <property type="match status" value="1"/>
</dbReference>
<dbReference type="PANTHER" id="PTHR11731">
    <property type="entry name" value="PROTEASE FAMILY S9B,C DIPEPTIDYL-PEPTIDASE IV-RELATED"/>
    <property type="match status" value="1"/>
</dbReference>
<dbReference type="Pfam" id="PF00930">
    <property type="entry name" value="DPPIV_N"/>
    <property type="match status" value="1"/>
</dbReference>
<dbReference type="Pfam" id="PF00326">
    <property type="entry name" value="Peptidase_S9"/>
    <property type="match status" value="1"/>
</dbReference>
<dbReference type="SUPFAM" id="SSF53474">
    <property type="entry name" value="alpha/beta-Hydrolases"/>
    <property type="match status" value="1"/>
</dbReference>
<dbReference type="SUPFAM" id="SSF82171">
    <property type="entry name" value="DPP6 N-terminal domain-like"/>
    <property type="match status" value="1"/>
</dbReference>
<dbReference type="PROSITE" id="PS00708">
    <property type="entry name" value="PRO_ENDOPEP_SER"/>
    <property type="match status" value="1"/>
</dbReference>